<evidence type="ECO:0000255" key="1">
    <source>
        <dbReference type="HAMAP-Rule" id="MF_01456"/>
    </source>
</evidence>
<name>NUOK_METI4</name>
<keyword id="KW-0997">Cell inner membrane</keyword>
<keyword id="KW-1003">Cell membrane</keyword>
<keyword id="KW-0472">Membrane</keyword>
<keyword id="KW-0520">NAD</keyword>
<keyword id="KW-0874">Quinone</keyword>
<keyword id="KW-1278">Translocase</keyword>
<keyword id="KW-0812">Transmembrane</keyword>
<keyword id="KW-1133">Transmembrane helix</keyword>
<keyword id="KW-0813">Transport</keyword>
<keyword id="KW-0830">Ubiquinone</keyword>
<comment type="function">
    <text evidence="1">NDH-1 shuttles electrons from NADH, via FMN and iron-sulfur (Fe-S) centers, to quinones in the respiratory chain. The immediate electron acceptor for the enzyme in this species is believed to be ubiquinone. Couples the redox reaction to proton translocation (for every two electrons transferred, four hydrogen ions are translocated across the cytoplasmic membrane), and thus conserves the redox energy in a proton gradient.</text>
</comment>
<comment type="catalytic activity">
    <reaction evidence="1">
        <text>a quinone + NADH + 5 H(+)(in) = a quinol + NAD(+) + 4 H(+)(out)</text>
        <dbReference type="Rhea" id="RHEA:57888"/>
        <dbReference type="ChEBI" id="CHEBI:15378"/>
        <dbReference type="ChEBI" id="CHEBI:24646"/>
        <dbReference type="ChEBI" id="CHEBI:57540"/>
        <dbReference type="ChEBI" id="CHEBI:57945"/>
        <dbReference type="ChEBI" id="CHEBI:132124"/>
    </reaction>
</comment>
<comment type="subunit">
    <text evidence="1">NDH-1 is composed of 14 different subunits. Subunits NuoA, H, J, K, L, M, N constitute the membrane sector of the complex.</text>
</comment>
<comment type="subcellular location">
    <subcellularLocation>
        <location evidence="1">Cell inner membrane</location>
        <topology evidence="1">Multi-pass membrane protein</topology>
    </subcellularLocation>
</comment>
<comment type="similarity">
    <text evidence="1">Belongs to the complex I subunit 4L family.</text>
</comment>
<organism>
    <name type="scientific">Methylacidiphilum infernorum (isolate V4)</name>
    <name type="common">Methylokorus infernorum (strain V4)</name>
    <dbReference type="NCBI Taxonomy" id="481448"/>
    <lineage>
        <taxon>Bacteria</taxon>
        <taxon>Pseudomonadati</taxon>
        <taxon>Verrucomicrobiota</taxon>
        <taxon>Methylacidiphilae</taxon>
        <taxon>Methylacidiphilales</taxon>
        <taxon>Methylacidiphilaceae</taxon>
        <taxon>Methylacidiphilum (ex Ratnadevi et al. 2023)</taxon>
    </lineage>
</organism>
<proteinExistence type="inferred from homology"/>
<reference key="1">
    <citation type="journal article" date="2008" name="Biol. Direct">
        <title>Complete genome sequence of the extremely acidophilic methanotroph isolate V4, Methylacidiphilum infernorum, a representative of the bacterial phylum Verrucomicrobia.</title>
        <authorList>
            <person name="Hou S."/>
            <person name="Makarova K.S."/>
            <person name="Saw J.H."/>
            <person name="Senin P."/>
            <person name="Ly B.V."/>
            <person name="Zhou Z."/>
            <person name="Ren Y."/>
            <person name="Wang J."/>
            <person name="Galperin M.Y."/>
            <person name="Omelchenko M.V."/>
            <person name="Wolf Y.I."/>
            <person name="Yutin N."/>
            <person name="Koonin E.V."/>
            <person name="Stott M.B."/>
            <person name="Mountain B.W."/>
            <person name="Crowe M.A."/>
            <person name="Smirnova A.V."/>
            <person name="Dunfield P.F."/>
            <person name="Feng L."/>
            <person name="Wang L."/>
            <person name="Alam M."/>
        </authorList>
    </citation>
    <scope>NUCLEOTIDE SEQUENCE [LARGE SCALE GENOMIC DNA]</scope>
    <source>
        <strain>Isolate V4</strain>
    </source>
</reference>
<feature type="chain" id="PRO_0000390116" description="NADH-quinone oxidoreductase subunit K">
    <location>
        <begin position="1"/>
        <end position="101"/>
    </location>
</feature>
<feature type="transmembrane region" description="Helical" evidence="1">
    <location>
        <begin position="5"/>
        <end position="25"/>
    </location>
</feature>
<feature type="transmembrane region" description="Helical" evidence="1">
    <location>
        <begin position="30"/>
        <end position="50"/>
    </location>
</feature>
<feature type="transmembrane region" description="Helical" evidence="1">
    <location>
        <begin position="61"/>
        <end position="81"/>
    </location>
</feature>
<accession>B3DZT3</accession>
<sequence length="101" mass="10924">MHIGLTHYVVASGILFAIGLAGIILRRDLIVILMCLEIMLNAANLALVAFSRFNANLLGQVLVFFVITVAAAEVAVGLALIVALYRVKHTTKAEDITMLKF</sequence>
<gene>
    <name evidence="1" type="primary">nuoK</name>
    <name type="ordered locus">Minf_2214</name>
</gene>
<protein>
    <recommendedName>
        <fullName evidence="1">NADH-quinone oxidoreductase subunit K</fullName>
        <ecNumber evidence="1">7.1.1.-</ecNumber>
    </recommendedName>
    <alternativeName>
        <fullName evidence="1">NADH dehydrogenase I subunit K</fullName>
    </alternativeName>
    <alternativeName>
        <fullName evidence="1">NDH-1 subunit K</fullName>
    </alternativeName>
</protein>
<dbReference type="EC" id="7.1.1.-" evidence="1"/>
<dbReference type="EMBL" id="CP000975">
    <property type="protein sequence ID" value="ACD84268.1"/>
    <property type="molecule type" value="Genomic_DNA"/>
</dbReference>
<dbReference type="RefSeq" id="WP_012464548.1">
    <property type="nucleotide sequence ID" value="NC_010794.1"/>
</dbReference>
<dbReference type="SMR" id="B3DZT3"/>
<dbReference type="STRING" id="481448.Minf_2214"/>
<dbReference type="KEGG" id="min:Minf_2214"/>
<dbReference type="eggNOG" id="COG0713">
    <property type="taxonomic scope" value="Bacteria"/>
</dbReference>
<dbReference type="HOGENOM" id="CLU_144724_0_0_0"/>
<dbReference type="OrthoDB" id="9810120at2"/>
<dbReference type="Proteomes" id="UP000009149">
    <property type="component" value="Chromosome"/>
</dbReference>
<dbReference type="GO" id="GO:0030964">
    <property type="term" value="C:NADH dehydrogenase complex"/>
    <property type="evidence" value="ECO:0007669"/>
    <property type="project" value="TreeGrafter"/>
</dbReference>
<dbReference type="GO" id="GO:0005886">
    <property type="term" value="C:plasma membrane"/>
    <property type="evidence" value="ECO:0007669"/>
    <property type="project" value="UniProtKB-SubCell"/>
</dbReference>
<dbReference type="GO" id="GO:0050136">
    <property type="term" value="F:NADH:ubiquinone reductase (non-electrogenic) activity"/>
    <property type="evidence" value="ECO:0007669"/>
    <property type="project" value="UniProtKB-UniRule"/>
</dbReference>
<dbReference type="GO" id="GO:0048038">
    <property type="term" value="F:quinone binding"/>
    <property type="evidence" value="ECO:0007669"/>
    <property type="project" value="UniProtKB-KW"/>
</dbReference>
<dbReference type="GO" id="GO:0042773">
    <property type="term" value="P:ATP synthesis coupled electron transport"/>
    <property type="evidence" value="ECO:0007669"/>
    <property type="project" value="InterPro"/>
</dbReference>
<dbReference type="FunFam" id="1.10.287.3510:FF:000001">
    <property type="entry name" value="NADH-quinone oxidoreductase subunit K"/>
    <property type="match status" value="1"/>
</dbReference>
<dbReference type="Gene3D" id="1.10.287.3510">
    <property type="match status" value="1"/>
</dbReference>
<dbReference type="HAMAP" id="MF_01456">
    <property type="entry name" value="NDH1_NuoK"/>
    <property type="match status" value="1"/>
</dbReference>
<dbReference type="InterPro" id="IPR001133">
    <property type="entry name" value="NADH_UbQ_OxRdtase_chain4L/K"/>
</dbReference>
<dbReference type="InterPro" id="IPR039428">
    <property type="entry name" value="NUOK/Mnh_C1-like"/>
</dbReference>
<dbReference type="NCBIfam" id="NF004320">
    <property type="entry name" value="PRK05715.1-2"/>
    <property type="match status" value="1"/>
</dbReference>
<dbReference type="NCBIfam" id="NF004321">
    <property type="entry name" value="PRK05715.1-3"/>
    <property type="match status" value="1"/>
</dbReference>
<dbReference type="NCBIfam" id="NF004323">
    <property type="entry name" value="PRK05715.1-5"/>
    <property type="match status" value="1"/>
</dbReference>
<dbReference type="PANTHER" id="PTHR11434:SF21">
    <property type="entry name" value="NADH DEHYDROGENASE SUBUNIT 4L-RELATED"/>
    <property type="match status" value="1"/>
</dbReference>
<dbReference type="PANTHER" id="PTHR11434">
    <property type="entry name" value="NADH-UBIQUINONE OXIDOREDUCTASE SUBUNIT ND4L"/>
    <property type="match status" value="1"/>
</dbReference>
<dbReference type="Pfam" id="PF00420">
    <property type="entry name" value="Oxidored_q2"/>
    <property type="match status" value="1"/>
</dbReference>